<proteinExistence type="inferred from homology"/>
<feature type="signal peptide" evidence="2">
    <location>
        <begin position="1"/>
        <end position="28"/>
    </location>
</feature>
<feature type="chain" id="PRO_0000005048" description="Growth-regulated alpha protein">
    <location>
        <begin position="29"/>
        <end position="101"/>
    </location>
</feature>
<feature type="disulfide bond" evidence="1">
    <location>
        <begin position="37"/>
        <end position="63"/>
    </location>
</feature>
<feature type="disulfide bond" evidence="1">
    <location>
        <begin position="39"/>
        <end position="79"/>
    </location>
</feature>
<name>GROA_CRIGR</name>
<dbReference type="EMBL" id="J03560">
    <property type="protein sequence ID" value="AAA36985.1"/>
    <property type="molecule type" value="mRNA"/>
</dbReference>
<dbReference type="PIR" id="B28414">
    <property type="entry name" value="B28414"/>
</dbReference>
<dbReference type="RefSeq" id="NP_001230973.1">
    <property type="nucleotide sequence ID" value="NM_001244044.1"/>
</dbReference>
<dbReference type="SMR" id="P09340"/>
<dbReference type="PaxDb" id="10029-NP_001230973.1"/>
<dbReference type="GeneID" id="100689059"/>
<dbReference type="KEGG" id="cge:100689059"/>
<dbReference type="CTD" id="2919"/>
<dbReference type="eggNOG" id="ENOG502S7MM">
    <property type="taxonomic scope" value="Eukaryota"/>
</dbReference>
<dbReference type="OrthoDB" id="8872899at2759"/>
<dbReference type="Proteomes" id="UP000694386">
    <property type="component" value="Unplaced"/>
</dbReference>
<dbReference type="Proteomes" id="UP001108280">
    <property type="component" value="Chromosome 1"/>
</dbReference>
<dbReference type="GO" id="GO:0005615">
    <property type="term" value="C:extracellular space"/>
    <property type="evidence" value="ECO:0007669"/>
    <property type="project" value="UniProtKB-KW"/>
</dbReference>
<dbReference type="GO" id="GO:0008009">
    <property type="term" value="F:chemokine activity"/>
    <property type="evidence" value="ECO:0007669"/>
    <property type="project" value="InterPro"/>
</dbReference>
<dbReference type="GO" id="GO:0008083">
    <property type="term" value="F:growth factor activity"/>
    <property type="evidence" value="ECO:0007669"/>
    <property type="project" value="UniProtKB-KW"/>
</dbReference>
<dbReference type="GO" id="GO:0006955">
    <property type="term" value="P:immune response"/>
    <property type="evidence" value="ECO:0007669"/>
    <property type="project" value="InterPro"/>
</dbReference>
<dbReference type="GO" id="GO:0006954">
    <property type="term" value="P:inflammatory response"/>
    <property type="evidence" value="ECO:0007669"/>
    <property type="project" value="UniProtKB-KW"/>
</dbReference>
<dbReference type="CDD" id="cd00273">
    <property type="entry name" value="Chemokine_CXC"/>
    <property type="match status" value="1"/>
</dbReference>
<dbReference type="FunFam" id="2.40.50.40:FF:000004">
    <property type="entry name" value="C-X-C motif chemokine"/>
    <property type="match status" value="1"/>
</dbReference>
<dbReference type="Gene3D" id="2.40.50.40">
    <property type="match status" value="1"/>
</dbReference>
<dbReference type="InterPro" id="IPR039809">
    <property type="entry name" value="Chemokine_b/g/d"/>
</dbReference>
<dbReference type="InterPro" id="IPR001089">
    <property type="entry name" value="Chemokine_CXC"/>
</dbReference>
<dbReference type="InterPro" id="IPR018048">
    <property type="entry name" value="Chemokine_CXC_CS"/>
</dbReference>
<dbReference type="InterPro" id="IPR001811">
    <property type="entry name" value="Chemokine_IL8-like_dom"/>
</dbReference>
<dbReference type="InterPro" id="IPR033899">
    <property type="entry name" value="CXC_Chemokine_domain"/>
</dbReference>
<dbReference type="InterPro" id="IPR036048">
    <property type="entry name" value="Interleukin_8-like_sf"/>
</dbReference>
<dbReference type="PANTHER" id="PTHR12015:SF192">
    <property type="entry name" value="GROWTH-REGULATED ALPHA PROTEIN"/>
    <property type="match status" value="1"/>
</dbReference>
<dbReference type="PANTHER" id="PTHR12015">
    <property type="entry name" value="SMALL INDUCIBLE CYTOKINE A"/>
    <property type="match status" value="1"/>
</dbReference>
<dbReference type="Pfam" id="PF00048">
    <property type="entry name" value="IL8"/>
    <property type="match status" value="1"/>
</dbReference>
<dbReference type="PRINTS" id="PR00436">
    <property type="entry name" value="INTERLEUKIN8"/>
</dbReference>
<dbReference type="PRINTS" id="PR00437">
    <property type="entry name" value="SMALLCYTKCXC"/>
</dbReference>
<dbReference type="SMART" id="SM00199">
    <property type="entry name" value="SCY"/>
    <property type="match status" value="1"/>
</dbReference>
<dbReference type="SUPFAM" id="SSF54117">
    <property type="entry name" value="Interleukin 8-like chemokines"/>
    <property type="match status" value="1"/>
</dbReference>
<dbReference type="PROSITE" id="PS00471">
    <property type="entry name" value="SMALL_CYTOKINES_CXC"/>
    <property type="match status" value="1"/>
</dbReference>
<sequence>MAPATRSLLRAPLLLLLLLLATSRLATGAPVANELRCQCLQTMTGVHLKNIQSLKVTPPGPHCTQTEVIATLKNGQEACLNPEAPMVQKIVQKMLKSGIRK</sequence>
<gene>
    <name type="primary">CXCL1</name>
    <name type="synonym">GRO</name>
    <name type="synonym">SCYB1</name>
</gene>
<accession>P09340</accession>
<reference key="1">
    <citation type="journal article" date="1987" name="Proc. Natl. Acad. Sci. U.S.A.">
        <title>Constitutive overexpression of a growth-regulated gene in transformed Chinese hamster and human cells.</title>
        <authorList>
            <person name="Anisowicz A."/>
            <person name="Bardwell L."/>
            <person name="Sager R."/>
        </authorList>
    </citation>
    <scope>NUCLEOTIDE SEQUENCE [MRNA]</scope>
</reference>
<keyword id="KW-0202">Cytokine</keyword>
<keyword id="KW-1015">Disulfide bond</keyword>
<keyword id="KW-0339">Growth factor</keyword>
<keyword id="KW-0395">Inflammatory response</keyword>
<keyword id="KW-0964">Secreted</keyword>
<keyword id="KW-0732">Signal</keyword>
<organism>
    <name type="scientific">Cricetulus griseus</name>
    <name type="common">Chinese hamster</name>
    <name type="synonym">Cricetulus barabensis griseus</name>
    <dbReference type="NCBI Taxonomy" id="10029"/>
    <lineage>
        <taxon>Eukaryota</taxon>
        <taxon>Metazoa</taxon>
        <taxon>Chordata</taxon>
        <taxon>Craniata</taxon>
        <taxon>Vertebrata</taxon>
        <taxon>Euteleostomi</taxon>
        <taxon>Mammalia</taxon>
        <taxon>Eutheria</taxon>
        <taxon>Euarchontoglires</taxon>
        <taxon>Glires</taxon>
        <taxon>Rodentia</taxon>
        <taxon>Myomorpha</taxon>
        <taxon>Muroidea</taxon>
        <taxon>Cricetidae</taxon>
        <taxon>Cricetinae</taxon>
        <taxon>Cricetulus</taxon>
    </lineage>
</organism>
<evidence type="ECO:0000250" key="1"/>
<evidence type="ECO:0000255" key="2"/>
<evidence type="ECO:0000305" key="3"/>
<comment type="function">
    <text>Has chemotactic activity for neutrophils.</text>
</comment>
<comment type="subcellular location">
    <subcellularLocation>
        <location>Secreted</location>
    </subcellularLocation>
</comment>
<comment type="similarity">
    <text evidence="3">Belongs to the intercrine alpha (chemokine CxC) family.</text>
</comment>
<protein>
    <recommendedName>
        <fullName>Growth-regulated alpha protein</fullName>
    </recommendedName>
    <alternativeName>
        <fullName>C-X-C motif chemokine 1</fullName>
    </alternativeName>
</protein>